<dbReference type="EC" id="2.1.1.182" evidence="1"/>
<dbReference type="EMBL" id="CP000507">
    <property type="protein sequence ID" value="ABM01022.1"/>
    <property type="molecule type" value="Genomic_DNA"/>
</dbReference>
<dbReference type="RefSeq" id="WP_011760927.1">
    <property type="nucleotide sequence ID" value="NC_008700.1"/>
</dbReference>
<dbReference type="SMR" id="A1S9G5"/>
<dbReference type="STRING" id="326297.Sama_2819"/>
<dbReference type="KEGG" id="saz:Sama_2819"/>
<dbReference type="eggNOG" id="COG0030">
    <property type="taxonomic scope" value="Bacteria"/>
</dbReference>
<dbReference type="HOGENOM" id="CLU_041220_0_1_6"/>
<dbReference type="OrthoDB" id="9814755at2"/>
<dbReference type="Proteomes" id="UP000009175">
    <property type="component" value="Chromosome"/>
</dbReference>
<dbReference type="GO" id="GO:0005829">
    <property type="term" value="C:cytosol"/>
    <property type="evidence" value="ECO:0007669"/>
    <property type="project" value="TreeGrafter"/>
</dbReference>
<dbReference type="GO" id="GO:0052908">
    <property type="term" value="F:16S rRNA (adenine(1518)-N(6)/adenine(1519)-N(6))-dimethyltransferase activity"/>
    <property type="evidence" value="ECO:0007669"/>
    <property type="project" value="UniProtKB-EC"/>
</dbReference>
<dbReference type="GO" id="GO:0003723">
    <property type="term" value="F:RNA binding"/>
    <property type="evidence" value="ECO:0007669"/>
    <property type="project" value="UniProtKB-KW"/>
</dbReference>
<dbReference type="FunFam" id="1.10.8.100:FF:000001">
    <property type="entry name" value="Ribosomal RNA small subunit methyltransferase A"/>
    <property type="match status" value="1"/>
</dbReference>
<dbReference type="FunFam" id="3.40.50.150:FF:000006">
    <property type="entry name" value="Ribosomal RNA small subunit methyltransferase A"/>
    <property type="match status" value="1"/>
</dbReference>
<dbReference type="Gene3D" id="1.10.8.100">
    <property type="entry name" value="Ribosomal RNA adenine dimethylase-like, domain 2"/>
    <property type="match status" value="1"/>
</dbReference>
<dbReference type="Gene3D" id="3.40.50.150">
    <property type="entry name" value="Vaccinia Virus protein VP39"/>
    <property type="match status" value="1"/>
</dbReference>
<dbReference type="HAMAP" id="MF_00607">
    <property type="entry name" value="16SrRNA_methyltr_A"/>
    <property type="match status" value="1"/>
</dbReference>
<dbReference type="InterPro" id="IPR001737">
    <property type="entry name" value="KsgA/Erm"/>
</dbReference>
<dbReference type="InterPro" id="IPR023165">
    <property type="entry name" value="rRNA_Ade_diMease-like_C"/>
</dbReference>
<dbReference type="InterPro" id="IPR020596">
    <property type="entry name" value="rRNA_Ade_Mease_Trfase_CS"/>
</dbReference>
<dbReference type="InterPro" id="IPR020598">
    <property type="entry name" value="rRNA_Ade_methylase_Trfase_N"/>
</dbReference>
<dbReference type="InterPro" id="IPR011530">
    <property type="entry name" value="rRNA_adenine_dimethylase"/>
</dbReference>
<dbReference type="InterPro" id="IPR029063">
    <property type="entry name" value="SAM-dependent_MTases_sf"/>
</dbReference>
<dbReference type="NCBIfam" id="TIGR00755">
    <property type="entry name" value="ksgA"/>
    <property type="match status" value="1"/>
</dbReference>
<dbReference type="PANTHER" id="PTHR11727">
    <property type="entry name" value="DIMETHYLADENOSINE TRANSFERASE"/>
    <property type="match status" value="1"/>
</dbReference>
<dbReference type="PANTHER" id="PTHR11727:SF7">
    <property type="entry name" value="DIMETHYLADENOSINE TRANSFERASE-RELATED"/>
    <property type="match status" value="1"/>
</dbReference>
<dbReference type="Pfam" id="PF00398">
    <property type="entry name" value="RrnaAD"/>
    <property type="match status" value="1"/>
</dbReference>
<dbReference type="SMART" id="SM00650">
    <property type="entry name" value="rADc"/>
    <property type="match status" value="1"/>
</dbReference>
<dbReference type="SUPFAM" id="SSF53335">
    <property type="entry name" value="S-adenosyl-L-methionine-dependent methyltransferases"/>
    <property type="match status" value="1"/>
</dbReference>
<dbReference type="PROSITE" id="PS01131">
    <property type="entry name" value="RRNA_A_DIMETH"/>
    <property type="match status" value="1"/>
</dbReference>
<dbReference type="PROSITE" id="PS51689">
    <property type="entry name" value="SAM_RNA_A_N6_MT"/>
    <property type="match status" value="1"/>
</dbReference>
<name>RSMA_SHEAM</name>
<gene>
    <name evidence="1" type="primary">rsmA</name>
    <name evidence="1" type="synonym">ksgA</name>
    <name type="ordered locus">Sama_2819</name>
</gene>
<organism>
    <name type="scientific">Shewanella amazonensis (strain ATCC BAA-1098 / SB2B)</name>
    <dbReference type="NCBI Taxonomy" id="326297"/>
    <lineage>
        <taxon>Bacteria</taxon>
        <taxon>Pseudomonadati</taxon>
        <taxon>Pseudomonadota</taxon>
        <taxon>Gammaproteobacteria</taxon>
        <taxon>Alteromonadales</taxon>
        <taxon>Shewanellaceae</taxon>
        <taxon>Shewanella</taxon>
    </lineage>
</organism>
<reference key="1">
    <citation type="submission" date="2006-12" db="EMBL/GenBank/DDBJ databases">
        <title>Complete sequence of Shewanella amazonensis SB2B.</title>
        <authorList>
            <consortium name="US DOE Joint Genome Institute"/>
            <person name="Copeland A."/>
            <person name="Lucas S."/>
            <person name="Lapidus A."/>
            <person name="Barry K."/>
            <person name="Detter J.C."/>
            <person name="Glavina del Rio T."/>
            <person name="Hammon N."/>
            <person name="Israni S."/>
            <person name="Dalin E."/>
            <person name="Tice H."/>
            <person name="Pitluck S."/>
            <person name="Munk A.C."/>
            <person name="Brettin T."/>
            <person name="Bruce D."/>
            <person name="Han C."/>
            <person name="Tapia R."/>
            <person name="Gilna P."/>
            <person name="Schmutz J."/>
            <person name="Larimer F."/>
            <person name="Land M."/>
            <person name="Hauser L."/>
            <person name="Kyrpides N."/>
            <person name="Mikhailova N."/>
            <person name="Fredrickson J."/>
            <person name="Richardson P."/>
        </authorList>
    </citation>
    <scope>NUCLEOTIDE SEQUENCE [LARGE SCALE GENOMIC DNA]</scope>
    <source>
        <strain>ATCC BAA-1098 / SB2B</strain>
    </source>
</reference>
<protein>
    <recommendedName>
        <fullName evidence="1">Ribosomal RNA small subunit methyltransferase A</fullName>
        <ecNumber evidence="1">2.1.1.182</ecNumber>
    </recommendedName>
    <alternativeName>
        <fullName evidence="1">16S rRNA (adenine(1518)-N(6)/adenine(1519)-N(6))-dimethyltransferase</fullName>
    </alternativeName>
    <alternativeName>
        <fullName evidence="1">16S rRNA dimethyladenosine transferase</fullName>
    </alternativeName>
    <alternativeName>
        <fullName evidence="1">16S rRNA dimethylase</fullName>
    </alternativeName>
    <alternativeName>
        <fullName evidence="1">S-adenosylmethionine-6-N', N'-adenosyl(rRNA) dimethyltransferase</fullName>
    </alternativeName>
</protein>
<proteinExistence type="inferred from homology"/>
<feature type="chain" id="PRO_1000056665" description="Ribosomal RNA small subunit methyltransferase A">
    <location>
        <begin position="1"/>
        <end position="267"/>
    </location>
</feature>
<feature type="binding site" evidence="1">
    <location>
        <position position="18"/>
    </location>
    <ligand>
        <name>S-adenosyl-L-methionine</name>
        <dbReference type="ChEBI" id="CHEBI:59789"/>
    </ligand>
</feature>
<feature type="binding site" evidence="1">
    <location>
        <position position="20"/>
    </location>
    <ligand>
        <name>S-adenosyl-L-methionine</name>
        <dbReference type="ChEBI" id="CHEBI:59789"/>
    </ligand>
</feature>
<feature type="binding site" evidence="1">
    <location>
        <position position="45"/>
    </location>
    <ligand>
        <name>S-adenosyl-L-methionine</name>
        <dbReference type="ChEBI" id="CHEBI:59789"/>
    </ligand>
</feature>
<feature type="binding site" evidence="1">
    <location>
        <position position="66"/>
    </location>
    <ligand>
        <name>S-adenosyl-L-methionine</name>
        <dbReference type="ChEBI" id="CHEBI:59789"/>
    </ligand>
</feature>
<feature type="binding site" evidence="1">
    <location>
        <position position="91"/>
    </location>
    <ligand>
        <name>S-adenosyl-L-methionine</name>
        <dbReference type="ChEBI" id="CHEBI:59789"/>
    </ligand>
</feature>
<feature type="binding site" evidence="1">
    <location>
        <position position="112"/>
    </location>
    <ligand>
        <name>S-adenosyl-L-methionine</name>
        <dbReference type="ChEBI" id="CHEBI:59789"/>
    </ligand>
</feature>
<keyword id="KW-0963">Cytoplasm</keyword>
<keyword id="KW-0489">Methyltransferase</keyword>
<keyword id="KW-1185">Reference proteome</keyword>
<keyword id="KW-0694">RNA-binding</keyword>
<keyword id="KW-0698">rRNA processing</keyword>
<keyword id="KW-0949">S-adenosyl-L-methionine</keyword>
<keyword id="KW-0808">Transferase</keyword>
<comment type="function">
    <text evidence="1">Specifically dimethylates two adjacent adenosines (A1518 and A1519) in the loop of a conserved hairpin near the 3'-end of 16S rRNA in the 30S particle. May play a critical role in biogenesis of 30S subunits.</text>
</comment>
<comment type="catalytic activity">
    <reaction evidence="1">
        <text>adenosine(1518)/adenosine(1519) in 16S rRNA + 4 S-adenosyl-L-methionine = N(6)-dimethyladenosine(1518)/N(6)-dimethyladenosine(1519) in 16S rRNA + 4 S-adenosyl-L-homocysteine + 4 H(+)</text>
        <dbReference type="Rhea" id="RHEA:19609"/>
        <dbReference type="Rhea" id="RHEA-COMP:10232"/>
        <dbReference type="Rhea" id="RHEA-COMP:10233"/>
        <dbReference type="ChEBI" id="CHEBI:15378"/>
        <dbReference type="ChEBI" id="CHEBI:57856"/>
        <dbReference type="ChEBI" id="CHEBI:59789"/>
        <dbReference type="ChEBI" id="CHEBI:74411"/>
        <dbReference type="ChEBI" id="CHEBI:74493"/>
        <dbReference type="EC" id="2.1.1.182"/>
    </reaction>
</comment>
<comment type="subcellular location">
    <subcellularLocation>
        <location evidence="1">Cytoplasm</location>
    </subcellularLocation>
</comment>
<comment type="similarity">
    <text evidence="1">Belongs to the class I-like SAM-binding methyltransferase superfamily. rRNA adenine N(6)-methyltransferase family. RsmA subfamily.</text>
</comment>
<evidence type="ECO:0000255" key="1">
    <source>
        <dbReference type="HAMAP-Rule" id="MF_00607"/>
    </source>
</evidence>
<sequence>MSNKVHLGHTARKRFGQNFLTDGNIINRIVGAISPDDDHVMVEIGPGLAALTEPVAMGIKNLTVIELDRDLAERLKVHPTLKDKLTIHQGDAMKFDFSQLVEPERKLKVFGNLPYNISTPLMFHLFEFAEHIENMHFMLQKEVVLRLSASPGTKAYGKLTVMAQYYCQVVPVLEVPPGCFTPPPKVDSAVVRLVPYAEKPWPCHDVEMLRKVCNTAFNMRRKTLRNNLKPLLQDADFDVLGIDAGLRPEDISVAQYVAMANYLCEKR</sequence>
<accession>A1S9G5</accession>